<proteinExistence type="inferred from homology"/>
<name>KCY_SACI2</name>
<sequence length="189" mass="21704">MIIIISGPPGSGKTSVAIKLANELSYKFISAGKIFRDIAQKMGLDIINLNKVAESNFDIDKMVDKKIFEFILSEKNLIIESHIAGWLFREYTNIAIYLWAPLKIRANRIAIRDKISYDQAISQIIKREYMHYKRFNKFYGIDINDLSVFDLVINTSNVDVNNIVKLILTYLSSVSQNPQPLKEKDINDK</sequence>
<feature type="chain" id="PRO_1000204461" description="Cytidylate kinase">
    <location>
        <begin position="1"/>
        <end position="189"/>
    </location>
</feature>
<feature type="binding site" evidence="1">
    <location>
        <begin position="7"/>
        <end position="15"/>
    </location>
    <ligand>
        <name>ATP</name>
        <dbReference type="ChEBI" id="CHEBI:30616"/>
    </ligand>
</feature>
<reference key="1">
    <citation type="journal article" date="2009" name="Proc. Natl. Acad. Sci. U.S.A.">
        <title>Biogeography of the Sulfolobus islandicus pan-genome.</title>
        <authorList>
            <person name="Reno M.L."/>
            <person name="Held N.L."/>
            <person name="Fields C.J."/>
            <person name="Burke P.V."/>
            <person name="Whitaker R.J."/>
        </authorList>
    </citation>
    <scope>NUCLEOTIDE SEQUENCE [LARGE SCALE GENOMIC DNA]</scope>
    <source>
        <strain>L.S.2.15 / Lassen #1</strain>
    </source>
</reference>
<dbReference type="EC" id="2.7.4.25" evidence="1"/>
<dbReference type="EMBL" id="CP001399">
    <property type="protein sequence ID" value="ACP35549.1"/>
    <property type="molecule type" value="Genomic_DNA"/>
</dbReference>
<dbReference type="RefSeq" id="WP_012711445.1">
    <property type="nucleotide sequence ID" value="NC_012589.1"/>
</dbReference>
<dbReference type="SMR" id="C3MQ86"/>
<dbReference type="GeneID" id="84061764"/>
<dbReference type="KEGG" id="sis:LS215_1542"/>
<dbReference type="HOGENOM" id="CLU_079959_1_0_2"/>
<dbReference type="OrthoDB" id="31096at2157"/>
<dbReference type="Proteomes" id="UP000001747">
    <property type="component" value="Chromosome"/>
</dbReference>
<dbReference type="GO" id="GO:0005737">
    <property type="term" value="C:cytoplasm"/>
    <property type="evidence" value="ECO:0007669"/>
    <property type="project" value="UniProtKB-SubCell"/>
</dbReference>
<dbReference type="GO" id="GO:0005524">
    <property type="term" value="F:ATP binding"/>
    <property type="evidence" value="ECO:0007669"/>
    <property type="project" value="UniProtKB-UniRule"/>
</dbReference>
<dbReference type="GO" id="GO:0036430">
    <property type="term" value="F:CMP kinase activity"/>
    <property type="evidence" value="ECO:0007669"/>
    <property type="project" value="RHEA"/>
</dbReference>
<dbReference type="GO" id="GO:0036431">
    <property type="term" value="F:dCMP kinase activity"/>
    <property type="evidence" value="ECO:0007669"/>
    <property type="project" value="RHEA"/>
</dbReference>
<dbReference type="GO" id="GO:0006220">
    <property type="term" value="P:pyrimidine nucleotide metabolic process"/>
    <property type="evidence" value="ECO:0007669"/>
    <property type="project" value="UniProtKB-UniRule"/>
</dbReference>
<dbReference type="CDD" id="cd02020">
    <property type="entry name" value="CMPK"/>
    <property type="match status" value="1"/>
</dbReference>
<dbReference type="Gene3D" id="3.40.50.300">
    <property type="entry name" value="P-loop containing nucleotide triphosphate hydrolases"/>
    <property type="match status" value="1"/>
</dbReference>
<dbReference type="HAMAP" id="MF_00239">
    <property type="entry name" value="Cytidyl_kinase_type2"/>
    <property type="match status" value="1"/>
</dbReference>
<dbReference type="InterPro" id="IPR011892">
    <property type="entry name" value="Cyt_kin_arch"/>
</dbReference>
<dbReference type="InterPro" id="IPR011994">
    <property type="entry name" value="Cytidylate_kinase_dom"/>
</dbReference>
<dbReference type="InterPro" id="IPR027417">
    <property type="entry name" value="P-loop_NTPase"/>
</dbReference>
<dbReference type="NCBIfam" id="TIGR02173">
    <property type="entry name" value="cyt_kin_arch"/>
    <property type="match status" value="1"/>
</dbReference>
<dbReference type="Pfam" id="PF13189">
    <property type="entry name" value="Cytidylate_kin2"/>
    <property type="match status" value="1"/>
</dbReference>
<dbReference type="SUPFAM" id="SSF52540">
    <property type="entry name" value="P-loop containing nucleoside triphosphate hydrolases"/>
    <property type="match status" value="1"/>
</dbReference>
<comment type="catalytic activity">
    <reaction evidence="1">
        <text>CMP + ATP = CDP + ADP</text>
        <dbReference type="Rhea" id="RHEA:11600"/>
        <dbReference type="ChEBI" id="CHEBI:30616"/>
        <dbReference type="ChEBI" id="CHEBI:58069"/>
        <dbReference type="ChEBI" id="CHEBI:60377"/>
        <dbReference type="ChEBI" id="CHEBI:456216"/>
        <dbReference type="EC" id="2.7.4.25"/>
    </reaction>
</comment>
<comment type="catalytic activity">
    <reaction evidence="1">
        <text>dCMP + ATP = dCDP + ADP</text>
        <dbReference type="Rhea" id="RHEA:25094"/>
        <dbReference type="ChEBI" id="CHEBI:30616"/>
        <dbReference type="ChEBI" id="CHEBI:57566"/>
        <dbReference type="ChEBI" id="CHEBI:58593"/>
        <dbReference type="ChEBI" id="CHEBI:456216"/>
        <dbReference type="EC" id="2.7.4.25"/>
    </reaction>
</comment>
<comment type="subcellular location">
    <subcellularLocation>
        <location evidence="1">Cytoplasm</location>
    </subcellularLocation>
</comment>
<comment type="similarity">
    <text evidence="1">Belongs to the cytidylate kinase family. Type 2 subfamily.</text>
</comment>
<organism>
    <name type="scientific">Saccharolobus islandicus (strain L.S.2.15 / Lassen #1)</name>
    <name type="common">Sulfolobus islandicus</name>
    <dbReference type="NCBI Taxonomy" id="429572"/>
    <lineage>
        <taxon>Archaea</taxon>
        <taxon>Thermoproteota</taxon>
        <taxon>Thermoprotei</taxon>
        <taxon>Sulfolobales</taxon>
        <taxon>Sulfolobaceae</taxon>
        <taxon>Saccharolobus</taxon>
    </lineage>
</organism>
<accession>C3MQ86</accession>
<protein>
    <recommendedName>
        <fullName evidence="1">Cytidylate kinase</fullName>
        <shortName evidence="1">CK</shortName>
        <ecNumber evidence="1">2.7.4.25</ecNumber>
    </recommendedName>
    <alternativeName>
        <fullName evidence="1">Cytidine monophosphate kinase</fullName>
        <shortName evidence="1">CMP kinase</shortName>
    </alternativeName>
</protein>
<gene>
    <name evidence="1" type="primary">cmk</name>
    <name type="ordered locus">LS215_1542</name>
</gene>
<keyword id="KW-0067">ATP-binding</keyword>
<keyword id="KW-0963">Cytoplasm</keyword>
<keyword id="KW-0418">Kinase</keyword>
<keyword id="KW-0547">Nucleotide-binding</keyword>
<keyword id="KW-0808">Transferase</keyword>
<evidence type="ECO:0000255" key="1">
    <source>
        <dbReference type="HAMAP-Rule" id="MF_00239"/>
    </source>
</evidence>